<gene>
    <name evidence="1" type="primary">clpX</name>
    <name type="ordered locus">BPP2007</name>
</gene>
<name>CLPX_BORPA</name>
<comment type="function">
    <text evidence="1">ATP-dependent specificity component of the Clp protease. It directs the protease to specific substrates. Can perform chaperone functions in the absence of ClpP.</text>
</comment>
<comment type="subunit">
    <text evidence="1">Component of the ClpX-ClpP complex. Forms a hexameric ring that, in the presence of ATP, binds to fourteen ClpP subunits assembled into a disk-like structure with a central cavity, resembling the structure of eukaryotic proteasomes.</text>
</comment>
<comment type="similarity">
    <text evidence="1">Belongs to the ClpX chaperone family.</text>
</comment>
<comment type="sequence caution" evidence="3">
    <conflict type="erroneous initiation">
        <sequence resource="EMBL-CDS" id="CAE37307"/>
    </conflict>
</comment>
<organism>
    <name type="scientific">Bordetella parapertussis (strain 12822 / ATCC BAA-587 / NCTC 13253)</name>
    <dbReference type="NCBI Taxonomy" id="257311"/>
    <lineage>
        <taxon>Bacteria</taxon>
        <taxon>Pseudomonadati</taxon>
        <taxon>Pseudomonadota</taxon>
        <taxon>Betaproteobacteria</taxon>
        <taxon>Burkholderiales</taxon>
        <taxon>Alcaligenaceae</taxon>
        <taxon>Bordetella</taxon>
    </lineage>
</organism>
<sequence length="434" mass="47152">MPEKKGSADAKVLHCSFCNKSQHEVRKLIAGPSVFICDECIDLCNDIIREEAQATARAAIRSELPTPAEIKTFLDQYVIGQTSPKRMLAVAVYNHYKRIRHGEIKGDEVELSKSNIMLIGPTGSGKTLLAQTLARMLNVPFVMADATTLTEAGYVGEDVENIIQKLLQNCNYDVEKAQRAIIYIDEIDKISRKSDNPSITRDVSGEGVQQALLKLIEGTVASVPPQGGRKHPNQDFVQVDTTNILFIVGGAFDGLEKVIRDRTEKSGIGFSAAVRAKSERGVGELFSEAEPEDLIKFGLIPELVGRLPVVATLDELDEAALVQILTEPKNALVKQFQKLFAMEGAELDVRPDALKAISRKALKRKTGARGLRSILEGALLDTMYDLPSQGNVSRVVLEANAVEGDGKPLLIYADESEAASGEKAGRGEVRDAAA</sequence>
<dbReference type="EMBL" id="BX640429">
    <property type="protein sequence ID" value="CAE37307.1"/>
    <property type="status" value="ALT_INIT"/>
    <property type="molecule type" value="Genomic_DNA"/>
</dbReference>
<dbReference type="RefSeq" id="WP_010926436.1">
    <property type="nucleotide sequence ID" value="NC_002928.3"/>
</dbReference>
<dbReference type="SMR" id="Q7W8X1"/>
<dbReference type="GeneID" id="93203781"/>
<dbReference type="KEGG" id="bpa:BPP2007"/>
<dbReference type="HOGENOM" id="CLU_014218_8_2_4"/>
<dbReference type="Proteomes" id="UP000001421">
    <property type="component" value="Chromosome"/>
</dbReference>
<dbReference type="GO" id="GO:0009376">
    <property type="term" value="C:HslUV protease complex"/>
    <property type="evidence" value="ECO:0007669"/>
    <property type="project" value="TreeGrafter"/>
</dbReference>
<dbReference type="GO" id="GO:0005524">
    <property type="term" value="F:ATP binding"/>
    <property type="evidence" value="ECO:0007669"/>
    <property type="project" value="UniProtKB-UniRule"/>
</dbReference>
<dbReference type="GO" id="GO:0016887">
    <property type="term" value="F:ATP hydrolysis activity"/>
    <property type="evidence" value="ECO:0007669"/>
    <property type="project" value="InterPro"/>
</dbReference>
<dbReference type="GO" id="GO:0140662">
    <property type="term" value="F:ATP-dependent protein folding chaperone"/>
    <property type="evidence" value="ECO:0007669"/>
    <property type="project" value="InterPro"/>
</dbReference>
<dbReference type="GO" id="GO:0046983">
    <property type="term" value="F:protein dimerization activity"/>
    <property type="evidence" value="ECO:0007669"/>
    <property type="project" value="InterPro"/>
</dbReference>
<dbReference type="GO" id="GO:0051082">
    <property type="term" value="F:unfolded protein binding"/>
    <property type="evidence" value="ECO:0007669"/>
    <property type="project" value="UniProtKB-UniRule"/>
</dbReference>
<dbReference type="GO" id="GO:0008270">
    <property type="term" value="F:zinc ion binding"/>
    <property type="evidence" value="ECO:0007669"/>
    <property type="project" value="InterPro"/>
</dbReference>
<dbReference type="GO" id="GO:0051301">
    <property type="term" value="P:cell division"/>
    <property type="evidence" value="ECO:0007669"/>
    <property type="project" value="TreeGrafter"/>
</dbReference>
<dbReference type="GO" id="GO:0051603">
    <property type="term" value="P:proteolysis involved in protein catabolic process"/>
    <property type="evidence" value="ECO:0007669"/>
    <property type="project" value="TreeGrafter"/>
</dbReference>
<dbReference type="CDD" id="cd19497">
    <property type="entry name" value="RecA-like_ClpX"/>
    <property type="match status" value="1"/>
</dbReference>
<dbReference type="FunFam" id="1.10.8.60:FF:000002">
    <property type="entry name" value="ATP-dependent Clp protease ATP-binding subunit ClpX"/>
    <property type="match status" value="1"/>
</dbReference>
<dbReference type="FunFam" id="3.40.50.300:FF:000005">
    <property type="entry name" value="ATP-dependent Clp protease ATP-binding subunit ClpX"/>
    <property type="match status" value="1"/>
</dbReference>
<dbReference type="Gene3D" id="1.10.8.60">
    <property type="match status" value="1"/>
</dbReference>
<dbReference type="Gene3D" id="6.20.220.10">
    <property type="entry name" value="ClpX chaperone, C4-type zinc finger domain"/>
    <property type="match status" value="1"/>
</dbReference>
<dbReference type="Gene3D" id="3.40.50.300">
    <property type="entry name" value="P-loop containing nucleotide triphosphate hydrolases"/>
    <property type="match status" value="1"/>
</dbReference>
<dbReference type="HAMAP" id="MF_00175">
    <property type="entry name" value="ClpX"/>
    <property type="match status" value="1"/>
</dbReference>
<dbReference type="InterPro" id="IPR003593">
    <property type="entry name" value="AAA+_ATPase"/>
</dbReference>
<dbReference type="InterPro" id="IPR050052">
    <property type="entry name" value="ATP-dep_Clp_protease_ClpX"/>
</dbReference>
<dbReference type="InterPro" id="IPR003959">
    <property type="entry name" value="ATPase_AAA_core"/>
</dbReference>
<dbReference type="InterPro" id="IPR019489">
    <property type="entry name" value="Clp_ATPase_C"/>
</dbReference>
<dbReference type="InterPro" id="IPR004487">
    <property type="entry name" value="Clp_protease_ATP-bd_su_ClpX"/>
</dbReference>
<dbReference type="InterPro" id="IPR046425">
    <property type="entry name" value="ClpX_bact"/>
</dbReference>
<dbReference type="InterPro" id="IPR027417">
    <property type="entry name" value="P-loop_NTPase"/>
</dbReference>
<dbReference type="InterPro" id="IPR010603">
    <property type="entry name" value="Znf_CppX_C4"/>
</dbReference>
<dbReference type="InterPro" id="IPR038366">
    <property type="entry name" value="Znf_CppX_C4_sf"/>
</dbReference>
<dbReference type="NCBIfam" id="TIGR00382">
    <property type="entry name" value="clpX"/>
    <property type="match status" value="1"/>
</dbReference>
<dbReference type="NCBIfam" id="NF003745">
    <property type="entry name" value="PRK05342.1"/>
    <property type="match status" value="1"/>
</dbReference>
<dbReference type="PANTHER" id="PTHR48102:SF7">
    <property type="entry name" value="ATP-DEPENDENT CLP PROTEASE ATP-BINDING SUBUNIT CLPX-LIKE, MITOCHONDRIAL"/>
    <property type="match status" value="1"/>
</dbReference>
<dbReference type="PANTHER" id="PTHR48102">
    <property type="entry name" value="ATP-DEPENDENT CLP PROTEASE ATP-BINDING SUBUNIT CLPX-LIKE, MITOCHONDRIAL-RELATED"/>
    <property type="match status" value="1"/>
</dbReference>
<dbReference type="Pfam" id="PF07724">
    <property type="entry name" value="AAA_2"/>
    <property type="match status" value="1"/>
</dbReference>
<dbReference type="Pfam" id="PF10431">
    <property type="entry name" value="ClpB_D2-small"/>
    <property type="match status" value="1"/>
</dbReference>
<dbReference type="Pfam" id="PF06689">
    <property type="entry name" value="zf-C4_ClpX"/>
    <property type="match status" value="1"/>
</dbReference>
<dbReference type="SMART" id="SM00382">
    <property type="entry name" value="AAA"/>
    <property type="match status" value="1"/>
</dbReference>
<dbReference type="SMART" id="SM01086">
    <property type="entry name" value="ClpB_D2-small"/>
    <property type="match status" value="1"/>
</dbReference>
<dbReference type="SMART" id="SM00994">
    <property type="entry name" value="zf-C4_ClpX"/>
    <property type="match status" value="1"/>
</dbReference>
<dbReference type="SUPFAM" id="SSF57716">
    <property type="entry name" value="Glucocorticoid receptor-like (DNA-binding domain)"/>
    <property type="match status" value="1"/>
</dbReference>
<dbReference type="SUPFAM" id="SSF52540">
    <property type="entry name" value="P-loop containing nucleoside triphosphate hydrolases"/>
    <property type="match status" value="1"/>
</dbReference>
<dbReference type="PROSITE" id="PS51902">
    <property type="entry name" value="CLPX_ZB"/>
    <property type="match status" value="1"/>
</dbReference>
<evidence type="ECO:0000255" key="1">
    <source>
        <dbReference type="HAMAP-Rule" id="MF_00175"/>
    </source>
</evidence>
<evidence type="ECO:0000255" key="2">
    <source>
        <dbReference type="PROSITE-ProRule" id="PRU01250"/>
    </source>
</evidence>
<evidence type="ECO:0000305" key="3"/>
<protein>
    <recommendedName>
        <fullName evidence="1">ATP-dependent Clp protease ATP-binding subunit ClpX</fullName>
    </recommendedName>
</protein>
<accession>Q7W8X1</accession>
<reference key="1">
    <citation type="journal article" date="2003" name="Nat. Genet.">
        <title>Comparative analysis of the genome sequences of Bordetella pertussis, Bordetella parapertussis and Bordetella bronchiseptica.</title>
        <authorList>
            <person name="Parkhill J."/>
            <person name="Sebaihia M."/>
            <person name="Preston A."/>
            <person name="Murphy L.D."/>
            <person name="Thomson N.R."/>
            <person name="Harris D.E."/>
            <person name="Holden M.T.G."/>
            <person name="Churcher C.M."/>
            <person name="Bentley S.D."/>
            <person name="Mungall K.L."/>
            <person name="Cerdeno-Tarraga A.-M."/>
            <person name="Temple L."/>
            <person name="James K.D."/>
            <person name="Harris B."/>
            <person name="Quail M.A."/>
            <person name="Achtman M."/>
            <person name="Atkin R."/>
            <person name="Baker S."/>
            <person name="Basham D."/>
            <person name="Bason N."/>
            <person name="Cherevach I."/>
            <person name="Chillingworth T."/>
            <person name="Collins M."/>
            <person name="Cronin A."/>
            <person name="Davis P."/>
            <person name="Doggett J."/>
            <person name="Feltwell T."/>
            <person name="Goble A."/>
            <person name="Hamlin N."/>
            <person name="Hauser H."/>
            <person name="Holroyd S."/>
            <person name="Jagels K."/>
            <person name="Leather S."/>
            <person name="Moule S."/>
            <person name="Norberczak H."/>
            <person name="O'Neil S."/>
            <person name="Ormond D."/>
            <person name="Price C."/>
            <person name="Rabbinowitsch E."/>
            <person name="Rutter S."/>
            <person name="Sanders M."/>
            <person name="Saunders D."/>
            <person name="Seeger K."/>
            <person name="Sharp S."/>
            <person name="Simmonds M."/>
            <person name="Skelton J."/>
            <person name="Squares R."/>
            <person name="Squares S."/>
            <person name="Stevens K."/>
            <person name="Unwin L."/>
            <person name="Whitehead S."/>
            <person name="Barrell B.G."/>
            <person name="Maskell D.J."/>
        </authorList>
    </citation>
    <scope>NUCLEOTIDE SEQUENCE [LARGE SCALE GENOMIC DNA]</scope>
    <source>
        <strain>12822 / ATCC BAA-587 / NCTC 13253</strain>
    </source>
</reference>
<feature type="chain" id="PRO_0000160322" description="ATP-dependent Clp protease ATP-binding subunit ClpX">
    <location>
        <begin position="1"/>
        <end position="434"/>
    </location>
</feature>
<feature type="domain" description="ClpX-type ZB" evidence="2">
    <location>
        <begin position="3"/>
        <end position="56"/>
    </location>
</feature>
<feature type="binding site" evidence="2">
    <location>
        <position position="15"/>
    </location>
    <ligand>
        <name>Zn(2+)</name>
        <dbReference type="ChEBI" id="CHEBI:29105"/>
    </ligand>
</feature>
<feature type="binding site" evidence="2">
    <location>
        <position position="18"/>
    </location>
    <ligand>
        <name>Zn(2+)</name>
        <dbReference type="ChEBI" id="CHEBI:29105"/>
    </ligand>
</feature>
<feature type="binding site" evidence="2">
    <location>
        <position position="37"/>
    </location>
    <ligand>
        <name>Zn(2+)</name>
        <dbReference type="ChEBI" id="CHEBI:29105"/>
    </ligand>
</feature>
<feature type="binding site" evidence="2">
    <location>
        <position position="40"/>
    </location>
    <ligand>
        <name>Zn(2+)</name>
        <dbReference type="ChEBI" id="CHEBI:29105"/>
    </ligand>
</feature>
<feature type="binding site" evidence="1">
    <location>
        <begin position="121"/>
        <end position="128"/>
    </location>
    <ligand>
        <name>ATP</name>
        <dbReference type="ChEBI" id="CHEBI:30616"/>
    </ligand>
</feature>
<proteinExistence type="inferred from homology"/>
<keyword id="KW-0067">ATP-binding</keyword>
<keyword id="KW-0143">Chaperone</keyword>
<keyword id="KW-0479">Metal-binding</keyword>
<keyword id="KW-0547">Nucleotide-binding</keyword>
<keyword id="KW-0862">Zinc</keyword>